<gene>
    <name evidence="1" type="primary">rpl39e</name>
    <name type="ordered locus">YN1551_1056</name>
</gene>
<dbReference type="EMBL" id="CP001404">
    <property type="protein sequence ID" value="ACP48163.1"/>
    <property type="molecule type" value="Genomic_DNA"/>
</dbReference>
<dbReference type="RefSeq" id="WP_012717318.1">
    <property type="nucleotide sequence ID" value="NC_012623.1"/>
</dbReference>
<dbReference type="SMR" id="C3NGA3"/>
<dbReference type="GeneID" id="7810784"/>
<dbReference type="KEGG" id="sin:YN1551_1056"/>
<dbReference type="HOGENOM" id="CLU_181948_4_0_2"/>
<dbReference type="Proteomes" id="UP000006818">
    <property type="component" value="Chromosome"/>
</dbReference>
<dbReference type="GO" id="GO:1990904">
    <property type="term" value="C:ribonucleoprotein complex"/>
    <property type="evidence" value="ECO:0007669"/>
    <property type="project" value="UniProtKB-KW"/>
</dbReference>
<dbReference type="GO" id="GO:0005840">
    <property type="term" value="C:ribosome"/>
    <property type="evidence" value="ECO:0007669"/>
    <property type="project" value="UniProtKB-KW"/>
</dbReference>
<dbReference type="GO" id="GO:0003735">
    <property type="term" value="F:structural constituent of ribosome"/>
    <property type="evidence" value="ECO:0007669"/>
    <property type="project" value="InterPro"/>
</dbReference>
<dbReference type="GO" id="GO:0006412">
    <property type="term" value="P:translation"/>
    <property type="evidence" value="ECO:0007669"/>
    <property type="project" value="UniProtKB-UniRule"/>
</dbReference>
<dbReference type="FunFam" id="1.10.1620.10:FF:000001">
    <property type="entry name" value="60S ribosomal protein-like L39"/>
    <property type="match status" value="1"/>
</dbReference>
<dbReference type="Gene3D" id="1.10.1620.10">
    <property type="entry name" value="Ribosomal protein L39e"/>
    <property type="match status" value="1"/>
</dbReference>
<dbReference type="HAMAP" id="MF_00629">
    <property type="entry name" value="Ribosomal_eL39"/>
    <property type="match status" value="1"/>
</dbReference>
<dbReference type="InterPro" id="IPR000077">
    <property type="entry name" value="Ribosomal_eL39"/>
</dbReference>
<dbReference type="InterPro" id="IPR020083">
    <property type="entry name" value="Ribosomal_eL39_CS"/>
</dbReference>
<dbReference type="InterPro" id="IPR023626">
    <property type="entry name" value="Ribosomal_eL39_dom_sf"/>
</dbReference>
<dbReference type="NCBIfam" id="NF002316">
    <property type="entry name" value="PRK01242.1"/>
    <property type="match status" value="1"/>
</dbReference>
<dbReference type="Pfam" id="PF00832">
    <property type="entry name" value="Ribosomal_L39"/>
    <property type="match status" value="1"/>
</dbReference>
<dbReference type="SUPFAM" id="SSF48662">
    <property type="entry name" value="Ribosomal protein L39e"/>
    <property type="match status" value="1"/>
</dbReference>
<dbReference type="PROSITE" id="PS00051">
    <property type="entry name" value="RIBOSOMAL_L39E"/>
    <property type="match status" value="1"/>
</dbReference>
<comment type="similarity">
    <text evidence="1">Belongs to the eukaryotic ribosomal protein eL39 family.</text>
</comment>
<name>RL39_SACI1</name>
<organism>
    <name type="scientific">Saccharolobus islandicus (strain Y.N.15.51 / Yellowstone #2)</name>
    <name type="common">Sulfolobus islandicus</name>
    <dbReference type="NCBI Taxonomy" id="419942"/>
    <lineage>
        <taxon>Archaea</taxon>
        <taxon>Thermoproteota</taxon>
        <taxon>Thermoprotei</taxon>
        <taxon>Sulfolobales</taxon>
        <taxon>Sulfolobaceae</taxon>
        <taxon>Saccharolobus</taxon>
    </lineage>
</organism>
<protein>
    <recommendedName>
        <fullName evidence="1">Large ribosomal subunit protein eL39</fullName>
    </recommendedName>
    <alternativeName>
        <fullName evidence="2">50S ribosomal protein L39e</fullName>
    </alternativeName>
</protein>
<evidence type="ECO:0000255" key="1">
    <source>
        <dbReference type="HAMAP-Rule" id="MF_00629"/>
    </source>
</evidence>
<evidence type="ECO:0000305" key="2"/>
<accession>C3NGA3</accession>
<proteinExistence type="inferred from homology"/>
<feature type="chain" id="PRO_1000212325" description="Large ribosomal subunit protein eL39">
    <location>
        <begin position="1"/>
        <end position="51"/>
    </location>
</feature>
<sequence length="51" mass="6161">MSRNKPVAKKFRLAKALKANSPIPIWIVLKTRGRVRYNPFRRNWRRNDLKV</sequence>
<reference key="1">
    <citation type="journal article" date="2009" name="Proc. Natl. Acad. Sci. U.S.A.">
        <title>Biogeography of the Sulfolobus islandicus pan-genome.</title>
        <authorList>
            <person name="Reno M.L."/>
            <person name="Held N.L."/>
            <person name="Fields C.J."/>
            <person name="Burke P.V."/>
            <person name="Whitaker R.J."/>
        </authorList>
    </citation>
    <scope>NUCLEOTIDE SEQUENCE [LARGE SCALE GENOMIC DNA]</scope>
    <source>
        <strain>Y.N.15.51 / Yellowstone #2</strain>
    </source>
</reference>
<keyword id="KW-0687">Ribonucleoprotein</keyword>
<keyword id="KW-0689">Ribosomal protein</keyword>